<evidence type="ECO:0000255" key="1">
    <source>
        <dbReference type="HAMAP-Rule" id="MF_01152"/>
    </source>
</evidence>
<evidence type="ECO:0000256" key="2">
    <source>
        <dbReference type="SAM" id="MobiDB-lite"/>
    </source>
</evidence>
<protein>
    <recommendedName>
        <fullName evidence="1">Chaperone protein DnaJ</fullName>
    </recommendedName>
</protein>
<comment type="function">
    <text evidence="1">Participates actively in the response to hyperosmotic and heat shock by preventing the aggregation of stress-denatured proteins and by disaggregating proteins, also in an autonomous, DnaK-independent fashion. Unfolded proteins bind initially to DnaJ; upon interaction with the DnaJ-bound protein, DnaK hydrolyzes its bound ATP, resulting in the formation of a stable complex. GrpE releases ADP from DnaK; ATP binding to DnaK triggers the release of the substrate protein, thus completing the reaction cycle. Several rounds of ATP-dependent interactions between DnaJ, DnaK and GrpE are required for fully efficient folding. Also involved, together with DnaK and GrpE, in the DNA replication of plasmids through activation of initiation proteins.</text>
</comment>
<comment type="cofactor">
    <cofactor evidence="1">
        <name>Zn(2+)</name>
        <dbReference type="ChEBI" id="CHEBI:29105"/>
    </cofactor>
    <text evidence="1">Binds 2 Zn(2+) ions per monomer.</text>
</comment>
<comment type="subunit">
    <text evidence="1">Homodimer.</text>
</comment>
<comment type="subcellular location">
    <subcellularLocation>
        <location evidence="1">Cytoplasm</location>
    </subcellularLocation>
</comment>
<comment type="domain">
    <text evidence="1">The J domain is necessary and sufficient to stimulate DnaK ATPase activity. Zinc center 1 plays an important role in the autonomous, DnaK-independent chaperone activity of DnaJ. Zinc center 2 is essential for interaction with DnaK and for DnaJ activity.</text>
</comment>
<comment type="similarity">
    <text evidence="1">Belongs to the DnaJ family.</text>
</comment>
<dbReference type="EMBL" id="CP001365">
    <property type="protein sequence ID" value="ACM56283.1"/>
    <property type="molecule type" value="Genomic_DNA"/>
</dbReference>
<dbReference type="RefSeq" id="WP_012659915.1">
    <property type="nucleotide sequence ID" value="NC_012029.1"/>
</dbReference>
<dbReference type="SMR" id="B9LUC6"/>
<dbReference type="GeneID" id="7401816"/>
<dbReference type="KEGG" id="hla:Hlac_0681"/>
<dbReference type="eggNOG" id="arCOG02846">
    <property type="taxonomic scope" value="Archaea"/>
</dbReference>
<dbReference type="HOGENOM" id="CLU_017633_0_7_2"/>
<dbReference type="Proteomes" id="UP000000740">
    <property type="component" value="Chromosome 1"/>
</dbReference>
<dbReference type="GO" id="GO:0005737">
    <property type="term" value="C:cytoplasm"/>
    <property type="evidence" value="ECO:0007669"/>
    <property type="project" value="UniProtKB-SubCell"/>
</dbReference>
<dbReference type="GO" id="GO:0005524">
    <property type="term" value="F:ATP binding"/>
    <property type="evidence" value="ECO:0007669"/>
    <property type="project" value="InterPro"/>
</dbReference>
<dbReference type="GO" id="GO:0031072">
    <property type="term" value="F:heat shock protein binding"/>
    <property type="evidence" value="ECO:0007669"/>
    <property type="project" value="InterPro"/>
</dbReference>
<dbReference type="GO" id="GO:0051082">
    <property type="term" value="F:unfolded protein binding"/>
    <property type="evidence" value="ECO:0007669"/>
    <property type="project" value="UniProtKB-UniRule"/>
</dbReference>
<dbReference type="GO" id="GO:0008270">
    <property type="term" value="F:zinc ion binding"/>
    <property type="evidence" value="ECO:0007669"/>
    <property type="project" value="UniProtKB-UniRule"/>
</dbReference>
<dbReference type="GO" id="GO:0051085">
    <property type="term" value="P:chaperone cofactor-dependent protein refolding"/>
    <property type="evidence" value="ECO:0007669"/>
    <property type="project" value="TreeGrafter"/>
</dbReference>
<dbReference type="GO" id="GO:0006260">
    <property type="term" value="P:DNA replication"/>
    <property type="evidence" value="ECO:0007669"/>
    <property type="project" value="UniProtKB-KW"/>
</dbReference>
<dbReference type="GO" id="GO:0042026">
    <property type="term" value="P:protein refolding"/>
    <property type="evidence" value="ECO:0007669"/>
    <property type="project" value="TreeGrafter"/>
</dbReference>
<dbReference type="GO" id="GO:0009408">
    <property type="term" value="P:response to heat"/>
    <property type="evidence" value="ECO:0007669"/>
    <property type="project" value="InterPro"/>
</dbReference>
<dbReference type="CDD" id="cd06257">
    <property type="entry name" value="DnaJ"/>
    <property type="match status" value="1"/>
</dbReference>
<dbReference type="CDD" id="cd10747">
    <property type="entry name" value="DnaJ_C"/>
    <property type="match status" value="1"/>
</dbReference>
<dbReference type="CDD" id="cd10719">
    <property type="entry name" value="DnaJ_zf"/>
    <property type="match status" value="1"/>
</dbReference>
<dbReference type="FunFam" id="2.60.260.20:FF:000005">
    <property type="entry name" value="Chaperone protein dnaJ 1, mitochondrial"/>
    <property type="match status" value="1"/>
</dbReference>
<dbReference type="FunFam" id="2.10.230.10:FF:000002">
    <property type="entry name" value="Molecular chaperone DnaJ"/>
    <property type="match status" value="1"/>
</dbReference>
<dbReference type="Gene3D" id="1.10.287.110">
    <property type="entry name" value="DnaJ domain"/>
    <property type="match status" value="1"/>
</dbReference>
<dbReference type="Gene3D" id="2.10.230.10">
    <property type="entry name" value="Heat shock protein DnaJ, cysteine-rich domain"/>
    <property type="match status" value="1"/>
</dbReference>
<dbReference type="Gene3D" id="2.60.260.20">
    <property type="entry name" value="Urease metallochaperone UreE, N-terminal domain"/>
    <property type="match status" value="2"/>
</dbReference>
<dbReference type="HAMAP" id="MF_01152">
    <property type="entry name" value="DnaJ"/>
    <property type="match status" value="1"/>
</dbReference>
<dbReference type="InterPro" id="IPR012724">
    <property type="entry name" value="DnaJ"/>
</dbReference>
<dbReference type="InterPro" id="IPR002939">
    <property type="entry name" value="DnaJ_C"/>
</dbReference>
<dbReference type="InterPro" id="IPR001623">
    <property type="entry name" value="DnaJ_domain"/>
</dbReference>
<dbReference type="InterPro" id="IPR008971">
    <property type="entry name" value="HSP40/DnaJ_pept-bd"/>
</dbReference>
<dbReference type="InterPro" id="IPR001305">
    <property type="entry name" value="HSP_DnaJ_Cys-rich_dom"/>
</dbReference>
<dbReference type="InterPro" id="IPR036410">
    <property type="entry name" value="HSP_DnaJ_Cys-rich_dom_sf"/>
</dbReference>
<dbReference type="InterPro" id="IPR036869">
    <property type="entry name" value="J_dom_sf"/>
</dbReference>
<dbReference type="NCBIfam" id="TIGR02349">
    <property type="entry name" value="DnaJ_bact"/>
    <property type="match status" value="1"/>
</dbReference>
<dbReference type="NCBIfam" id="NF008035">
    <property type="entry name" value="PRK10767.1"/>
    <property type="match status" value="1"/>
</dbReference>
<dbReference type="PANTHER" id="PTHR43096">
    <property type="entry name" value="DNAJ HOMOLOG 1, MITOCHONDRIAL-RELATED"/>
    <property type="match status" value="1"/>
</dbReference>
<dbReference type="PANTHER" id="PTHR43096:SF52">
    <property type="entry name" value="DNAJ HOMOLOG 1, MITOCHONDRIAL-RELATED"/>
    <property type="match status" value="1"/>
</dbReference>
<dbReference type="Pfam" id="PF00226">
    <property type="entry name" value="DnaJ"/>
    <property type="match status" value="1"/>
</dbReference>
<dbReference type="Pfam" id="PF01556">
    <property type="entry name" value="DnaJ_C"/>
    <property type="match status" value="1"/>
</dbReference>
<dbReference type="Pfam" id="PF00684">
    <property type="entry name" value="DnaJ_CXXCXGXG"/>
    <property type="match status" value="1"/>
</dbReference>
<dbReference type="PRINTS" id="PR00625">
    <property type="entry name" value="JDOMAIN"/>
</dbReference>
<dbReference type="SMART" id="SM00271">
    <property type="entry name" value="DnaJ"/>
    <property type="match status" value="1"/>
</dbReference>
<dbReference type="SUPFAM" id="SSF46565">
    <property type="entry name" value="Chaperone J-domain"/>
    <property type="match status" value="1"/>
</dbReference>
<dbReference type="SUPFAM" id="SSF57938">
    <property type="entry name" value="DnaJ/Hsp40 cysteine-rich domain"/>
    <property type="match status" value="1"/>
</dbReference>
<dbReference type="SUPFAM" id="SSF49493">
    <property type="entry name" value="HSP40/DnaJ peptide-binding domain"/>
    <property type="match status" value="2"/>
</dbReference>
<dbReference type="PROSITE" id="PS50076">
    <property type="entry name" value="DNAJ_2"/>
    <property type="match status" value="1"/>
</dbReference>
<dbReference type="PROSITE" id="PS51188">
    <property type="entry name" value="ZF_CR"/>
    <property type="match status" value="1"/>
</dbReference>
<sequence length="386" mass="40924">MSDNFYDVLGVSRDASEEEIKKAYRKQAAEHHPDVSDDDDAEERFKAIQKAKEVLTDEQKRQQYDQLGHDRFTEADKRGATGGGGPGGAGGPFGGAGGAGGAGGFEDIFNQFFGGGGGRGGGGGNRPRQGQDLRTGLTIDLEEAFEGATKEVTLTRPTQCDTCDGAGHPPDADVETCSQCNGRGQVQQVQQTPLGRVQQTSTCPRCEGSGELYSEDCADCGGDGVVREEATLSVEIPAGIRSGQSLRMEREGAPGENGGPNGDLLIEVDVDVGDRFERDGDDLRVNEAVSFPQAVFGDTIEVETVDGSVEMDVPTGTQSGETFRLKGKGMPRLRRRGRGDLYVKVGVVIPDSLNEEQREALEAFAEAGGEDVDVGGGFFKKLKSSF</sequence>
<name>DNAJ_HALLT</name>
<keyword id="KW-0143">Chaperone</keyword>
<keyword id="KW-0963">Cytoplasm</keyword>
<keyword id="KW-0235">DNA replication</keyword>
<keyword id="KW-0479">Metal-binding</keyword>
<keyword id="KW-1185">Reference proteome</keyword>
<keyword id="KW-0677">Repeat</keyword>
<keyword id="KW-0346">Stress response</keyword>
<keyword id="KW-0862">Zinc</keyword>
<keyword id="KW-0863">Zinc-finger</keyword>
<feature type="chain" id="PRO_1000164264" description="Chaperone protein DnaJ">
    <location>
        <begin position="1"/>
        <end position="386"/>
    </location>
</feature>
<feature type="domain" description="J" evidence="1">
    <location>
        <begin position="4"/>
        <end position="68"/>
    </location>
</feature>
<feature type="repeat" description="CXXCXGXG motif">
    <location>
        <begin position="160"/>
        <end position="167"/>
    </location>
</feature>
<feature type="repeat" description="CXXCXGXG motif">
    <location>
        <begin position="177"/>
        <end position="184"/>
    </location>
</feature>
<feature type="repeat" description="CXXCXGXG motif">
    <location>
        <begin position="203"/>
        <end position="210"/>
    </location>
</feature>
<feature type="repeat" description="CXXCXGXG motif">
    <location>
        <begin position="217"/>
        <end position="224"/>
    </location>
</feature>
<feature type="zinc finger region" description="CR-type" evidence="1">
    <location>
        <begin position="147"/>
        <end position="229"/>
    </location>
</feature>
<feature type="region of interest" description="Disordered" evidence="2">
    <location>
        <begin position="22"/>
        <end position="132"/>
    </location>
</feature>
<feature type="compositionally biased region" description="Basic and acidic residues" evidence="2">
    <location>
        <begin position="22"/>
        <end position="35"/>
    </location>
</feature>
<feature type="compositionally biased region" description="Basic and acidic residues" evidence="2">
    <location>
        <begin position="43"/>
        <end position="79"/>
    </location>
</feature>
<feature type="compositionally biased region" description="Gly residues" evidence="2">
    <location>
        <begin position="80"/>
        <end position="104"/>
    </location>
</feature>
<feature type="compositionally biased region" description="Gly residues" evidence="2">
    <location>
        <begin position="113"/>
        <end position="125"/>
    </location>
</feature>
<feature type="binding site" evidence="1">
    <location>
        <position position="160"/>
    </location>
    <ligand>
        <name>Zn(2+)</name>
        <dbReference type="ChEBI" id="CHEBI:29105"/>
        <label>1</label>
    </ligand>
</feature>
<feature type="binding site" evidence="1">
    <location>
        <position position="163"/>
    </location>
    <ligand>
        <name>Zn(2+)</name>
        <dbReference type="ChEBI" id="CHEBI:29105"/>
        <label>1</label>
    </ligand>
</feature>
<feature type="binding site" evidence="1">
    <location>
        <position position="177"/>
    </location>
    <ligand>
        <name>Zn(2+)</name>
        <dbReference type="ChEBI" id="CHEBI:29105"/>
        <label>2</label>
    </ligand>
</feature>
<feature type="binding site" evidence="1">
    <location>
        <position position="180"/>
    </location>
    <ligand>
        <name>Zn(2+)</name>
        <dbReference type="ChEBI" id="CHEBI:29105"/>
        <label>2</label>
    </ligand>
</feature>
<feature type="binding site" evidence="1">
    <location>
        <position position="203"/>
    </location>
    <ligand>
        <name>Zn(2+)</name>
        <dbReference type="ChEBI" id="CHEBI:29105"/>
        <label>2</label>
    </ligand>
</feature>
<feature type="binding site" evidence="1">
    <location>
        <position position="206"/>
    </location>
    <ligand>
        <name>Zn(2+)</name>
        <dbReference type="ChEBI" id="CHEBI:29105"/>
        <label>2</label>
    </ligand>
</feature>
<feature type="binding site" evidence="1">
    <location>
        <position position="217"/>
    </location>
    <ligand>
        <name>Zn(2+)</name>
        <dbReference type="ChEBI" id="CHEBI:29105"/>
        <label>1</label>
    </ligand>
</feature>
<feature type="binding site" evidence="1">
    <location>
        <position position="220"/>
    </location>
    <ligand>
        <name>Zn(2+)</name>
        <dbReference type="ChEBI" id="CHEBI:29105"/>
        <label>1</label>
    </ligand>
</feature>
<proteinExistence type="inferred from homology"/>
<gene>
    <name evidence="1" type="primary">dnaJ</name>
    <name type="ordered locus">Hlac_0681</name>
</gene>
<accession>B9LUC6</accession>
<reference key="1">
    <citation type="journal article" date="2016" name="Stand. Genomic Sci.">
        <title>Complete genome sequence of the Antarctic Halorubrum lacusprofundi type strain ACAM 34.</title>
        <authorList>
            <person name="Anderson I.J."/>
            <person name="DasSarma P."/>
            <person name="Lucas S."/>
            <person name="Copeland A."/>
            <person name="Lapidus A."/>
            <person name="Del Rio T.G."/>
            <person name="Tice H."/>
            <person name="Dalin E."/>
            <person name="Bruce D.C."/>
            <person name="Goodwin L."/>
            <person name="Pitluck S."/>
            <person name="Sims D."/>
            <person name="Brettin T.S."/>
            <person name="Detter J.C."/>
            <person name="Han C.S."/>
            <person name="Larimer F."/>
            <person name="Hauser L."/>
            <person name="Land M."/>
            <person name="Ivanova N."/>
            <person name="Richardson P."/>
            <person name="Cavicchioli R."/>
            <person name="DasSarma S."/>
            <person name="Woese C.R."/>
            <person name="Kyrpides N.C."/>
        </authorList>
    </citation>
    <scope>NUCLEOTIDE SEQUENCE [LARGE SCALE GENOMIC DNA]</scope>
    <source>
        <strain>ATCC 49239 / DSM 5036 / JCM 8891 / ACAM 34</strain>
    </source>
</reference>
<organism>
    <name type="scientific">Halorubrum lacusprofundi (strain ATCC 49239 / DSM 5036 / JCM 8891 / ACAM 34)</name>
    <dbReference type="NCBI Taxonomy" id="416348"/>
    <lineage>
        <taxon>Archaea</taxon>
        <taxon>Methanobacteriati</taxon>
        <taxon>Methanobacteriota</taxon>
        <taxon>Stenosarchaea group</taxon>
        <taxon>Halobacteria</taxon>
        <taxon>Halobacteriales</taxon>
        <taxon>Haloferacaceae</taxon>
        <taxon>Halorubrum</taxon>
    </lineage>
</organism>